<proteinExistence type="evidence at protein level"/>
<keyword id="KW-0067">ATP-binding</keyword>
<keyword id="KW-0131">Cell cycle</keyword>
<keyword id="KW-0132">Cell division</keyword>
<keyword id="KW-0137">Centromere</keyword>
<keyword id="KW-0158">Chromosome</keyword>
<keyword id="KW-0963">Cytoplasm</keyword>
<keyword id="KW-0206">Cytoskeleton</keyword>
<keyword id="KW-0418">Kinase</keyword>
<keyword id="KW-0995">Kinetochore</keyword>
<keyword id="KW-0469">Meiosis</keyword>
<keyword id="KW-0498">Mitosis</keyword>
<keyword id="KW-0547">Nucleotide-binding</keyword>
<keyword id="KW-0539">Nucleus</keyword>
<keyword id="KW-1185">Reference proteome</keyword>
<keyword id="KW-0677">Repeat</keyword>
<keyword id="KW-0723">Serine/threonine-protein kinase</keyword>
<keyword id="KW-0808">Transferase</keyword>
<protein>
    <recommendedName>
        <fullName>Serine/threonine-protein kinase plk-1</fullName>
        <ecNumber>2.7.11.21</ecNumber>
    </recommendedName>
    <alternativeName>
        <fullName>Polo-like kinase 1</fullName>
    </alternativeName>
</protein>
<sequence>MNRLPNIAKPPQKSNQRKEKAPPEVPALIADKDRGTYYEKGRFLGKGGFAHCYELTNRATREVVAGKVVPKSMLVKQYQRDKMTQEVQIHRELGHINIVKLFNFFEDNLNVYITLELCARRSLMELHKRRKAVTEPEARYFTHQIVDGVLYLHDLNIIHRDMKLGNLFLNDDLVVKIGDFGLATTVNGDERKKTLCGTPNYIAPEVLNKAGHSFEVDIWAVGCILYILLFGQPPFESKSLEETYSRIRHNNYTIPSIATQPAASLIRKMLDPEPTRRPTAKQVQRDGFFKSGFMPTRLPVSCLTMVPKFGGHETSMMEENVAPRGVDARSQRPLNGRAGLSALPQHIVSNNADRERAQQQAAEATFREPEDAYLSQLFHQVAVLLEQRIPGLEEEEAALDGYQSPECLPVFWISKWVDYSDKYGIGYQLCDNSVGVLFNDNSRIMLDQAGNELTYIEKSNKEHYFSMHSGEMPGLLNKKVTLLKYFRSYMNDHLVKAGEGSEQRAGDDLARLPTLRVWFRTKSAIVLHLSNGTVQINFFNDHVKMMMCPLMQAVTFIDQNKRMLTYKLNNLQRNGCPEKFLHRLKYAKTMIERLMSDANVVSQNPARQPDMPRSMAAARSASAGSRGPNQAASHLPQSASGSNIHPRR</sequence>
<gene>
    <name type="primary">plk-1</name>
    <name type="synonym">plc1</name>
    <name type="ORF">C14B9.4</name>
</gene>
<reference key="1">
    <citation type="journal article" date="1999" name="DNA Seq.">
        <title>Caenorhabditis elegans contains structural homologs of human prk and plk.</title>
        <authorList>
            <person name="Ouyang B."/>
            <person name="Wang Y."/>
            <person name="Dai W."/>
        </authorList>
    </citation>
    <scope>NUCLEOTIDE SEQUENCE [MRNA]</scope>
</reference>
<reference key="2">
    <citation type="journal article" date="2000" name="Genesis">
        <title>The polo-like kinase PLK-1 is required for nuclear envelope breakdown and the completion of meiosis in Caenorhabditis elegans.</title>
        <authorList>
            <person name="Chase D."/>
            <person name="Serafinas C."/>
            <person name="Ashcroft N."/>
            <person name="Kosinski M."/>
            <person name="Longo D."/>
            <person name="Ferris D.K."/>
            <person name="Golden A."/>
        </authorList>
    </citation>
    <scope>NUCLEOTIDE SEQUENCE [MRNA]</scope>
    <scope>FUNCTION</scope>
    <scope>SUBCELLULAR LOCATION</scope>
    <source>
        <strain>Bristol N2</strain>
    </source>
</reference>
<reference key="3">
    <citation type="journal article" date="1994" name="Nature">
        <title>2.2 Mb of contiguous nucleotide sequence from chromosome III of C. elegans.</title>
        <authorList>
            <person name="Wilson R."/>
            <person name="Ainscough R."/>
            <person name="Anderson K."/>
            <person name="Baynes C."/>
            <person name="Berks M."/>
            <person name="Bonfield J."/>
            <person name="Burton J."/>
            <person name="Connell M."/>
            <person name="Copsey T."/>
            <person name="Cooper J."/>
            <person name="Coulson A."/>
            <person name="Craxton M."/>
            <person name="Dear S."/>
            <person name="Du Z."/>
            <person name="Durbin R."/>
            <person name="Favello A."/>
            <person name="Fraser A."/>
            <person name="Fulton L."/>
            <person name="Gardner A."/>
            <person name="Green P."/>
            <person name="Hawkins T."/>
            <person name="Hillier L."/>
            <person name="Jier M."/>
            <person name="Johnston L."/>
            <person name="Jones M."/>
            <person name="Kershaw J."/>
            <person name="Kirsten J."/>
            <person name="Laisster N."/>
            <person name="Latreille P."/>
            <person name="Lightning J."/>
            <person name="Lloyd C."/>
            <person name="Mortimore B."/>
            <person name="O'Callaghan M."/>
            <person name="Parsons J."/>
            <person name="Percy C."/>
            <person name="Rifken L."/>
            <person name="Roopra A."/>
            <person name="Saunders D."/>
            <person name="Shownkeen R."/>
            <person name="Sims M."/>
            <person name="Smaldon N."/>
            <person name="Smith A."/>
            <person name="Smith M."/>
            <person name="Sonnhammer E."/>
            <person name="Staden R."/>
            <person name="Sulston J."/>
            <person name="Thierry-Mieg J."/>
            <person name="Thomas K."/>
            <person name="Vaudin M."/>
            <person name="Vaughan K."/>
            <person name="Waterston R."/>
            <person name="Watson A."/>
            <person name="Weinstock L."/>
            <person name="Wilkinson-Sproat J."/>
            <person name="Wohldman P."/>
        </authorList>
    </citation>
    <scope>NUCLEOTIDE SEQUENCE [LARGE SCALE GENOMIC DNA]</scope>
    <source>
        <strain>Bristol N2</strain>
    </source>
</reference>
<reference key="4">
    <citation type="journal article" date="1998" name="Science">
        <title>Genome sequence of the nematode C. elegans: a platform for investigating biology.</title>
        <authorList>
            <consortium name="The C. elegans sequencing consortium"/>
        </authorList>
    </citation>
    <scope>NUCLEOTIDE SEQUENCE [LARGE SCALE GENOMIC DNA]</scope>
    <source>
        <strain>Bristol N2</strain>
    </source>
</reference>
<reference key="5">
    <citation type="journal article" date="2008" name="Development">
        <title>Polo kinases regulate C. elegans embryonic polarity via binding to DYRK2-primed MEX-5 and MEX-6.</title>
        <authorList>
            <person name="Nishi Y."/>
            <person name="Rogers E."/>
            <person name="Robertson S.M."/>
            <person name="Lin R."/>
        </authorList>
    </citation>
    <scope>FUNCTION</scope>
    <scope>INTERACTION WITH MEX-5 AND MEX-6</scope>
    <scope>SUBCELLULAR LOCATION</scope>
    <scope>TISSUE SPECIFICITY</scope>
    <scope>DOMAIN</scope>
</reference>
<reference key="6">
    <citation type="journal article" date="2008" name="Development">
        <title>PLK-1 asymmetry contributes to asynchronous cell division of C. elegans embryos.</title>
        <authorList>
            <person name="Budirahardja Y."/>
            <person name="Gonczy P."/>
        </authorList>
    </citation>
    <scope>FUNCTION</scope>
    <scope>SUBCELLULAR LOCATION</scope>
</reference>
<reference key="7">
    <citation type="journal article" date="2008" name="J. Cell Biol.">
        <title>PAR proteins direct asymmetry of the cell cycle regulators Polo-like kinase and Cdc25.</title>
        <authorList>
            <person name="Rivers D.M."/>
            <person name="Moreno S."/>
            <person name="Abraham M."/>
            <person name="Ahringer J."/>
        </authorList>
    </citation>
    <scope>FUNCTION</scope>
    <scope>SUBCELLULAR LOCATION</scope>
    <scope>DOMAIN</scope>
    <scope>DISRUPTION PHENOTYPE</scope>
</reference>
<reference key="8">
    <citation type="journal article" date="2010" name="Development">
        <title>SPAT-1/Bora acts with Polo-like kinase 1 to regulate PAR polarity and cell cycle progression.</title>
        <authorList>
            <person name="Noatynska A."/>
            <person name="Panbianco C."/>
            <person name="Gotta M."/>
        </authorList>
    </citation>
    <scope>FUNCTION</scope>
    <scope>INTERACTION WITH SPAT-1</scope>
    <scope>SUBCELLULAR LOCATION</scope>
    <scope>TISSUE SPECIFICITY</scope>
    <scope>DISRUPTION PHENOTYPE</scope>
</reference>
<reference key="9">
    <citation type="journal article" date="2011" name="Dev. Cell">
        <title>Pairing centers recruit a Polo-like kinase to orchestrate meiotic chromosome dynamics in C. elegans.</title>
        <authorList>
            <person name="Harper N.C."/>
            <person name="Rillo R."/>
            <person name="Jover-Gil S."/>
            <person name="Assaf Z.J."/>
            <person name="Bhalla N."/>
            <person name="Dernburg A.F."/>
        </authorList>
    </citation>
    <scope>FUNCTION</scope>
    <scope>SUBCELLULAR LOCATION</scope>
    <scope>DISRUPTION PHENOTYPE</scope>
</reference>
<comment type="function">
    <text evidence="5 6 7 8 9 10">Required for oocyte nuclear envelope breakdown before entry of oocyte into spermatheca (PubMed:10660671). In meiotic cells, required for spindle dynamics and probably for spindle attachment to the chromosomes (PubMed:10660671). Zygotic role in the development of the germline and nerve cord (PubMed:10660671). In mitotic cells, plays a role in spindle organization and centrosome maturation (PubMed:20823068). Involved in asymmetric nuclear localization of cdc-25.1 during embryogenesis which affects cell division timing (PubMed:18305005, PubMed:18316412, PubMed:20823068). Together with plk-2, regulates cytoplasm polarity in early embryos (PubMed:18199581, PubMed:18305005, PubMed:18316412). May play a minor role in chromosome pairing and synapsis during oocyte meiosis I (PubMed:22018922).</text>
</comment>
<comment type="catalytic activity">
    <reaction>
        <text>L-seryl-[protein] + ATP = O-phospho-L-seryl-[protein] + ADP + H(+)</text>
        <dbReference type="Rhea" id="RHEA:17989"/>
        <dbReference type="Rhea" id="RHEA-COMP:9863"/>
        <dbReference type="Rhea" id="RHEA-COMP:11604"/>
        <dbReference type="ChEBI" id="CHEBI:15378"/>
        <dbReference type="ChEBI" id="CHEBI:29999"/>
        <dbReference type="ChEBI" id="CHEBI:30616"/>
        <dbReference type="ChEBI" id="CHEBI:83421"/>
        <dbReference type="ChEBI" id="CHEBI:456216"/>
        <dbReference type="EC" id="2.7.11.21"/>
    </reaction>
</comment>
<comment type="catalytic activity">
    <reaction>
        <text>L-threonyl-[protein] + ATP = O-phospho-L-threonyl-[protein] + ADP + H(+)</text>
        <dbReference type="Rhea" id="RHEA:46608"/>
        <dbReference type="Rhea" id="RHEA-COMP:11060"/>
        <dbReference type="Rhea" id="RHEA-COMP:11605"/>
        <dbReference type="ChEBI" id="CHEBI:15378"/>
        <dbReference type="ChEBI" id="CHEBI:30013"/>
        <dbReference type="ChEBI" id="CHEBI:30616"/>
        <dbReference type="ChEBI" id="CHEBI:61977"/>
        <dbReference type="ChEBI" id="CHEBI:456216"/>
        <dbReference type="EC" id="2.7.11.21"/>
    </reaction>
</comment>
<comment type="subunit">
    <text evidence="6 9">Interacts with mex-5, mex-6 and spat-1.</text>
</comment>
<comment type="interaction">
    <interactant intactId="EBI-315211">
        <id>P34331</id>
    </interactant>
    <interactant intactId="EBI-322479">
        <id>P91349</id>
        <label>spd-5</label>
    </interactant>
    <organismsDiffer>false</organismsDiffer>
    <experiments>3</experiments>
</comment>
<comment type="subcellular location">
    <subcellularLocation>
        <location evidence="5 7 10">Cytoplasm</location>
        <location evidence="5 7 10">Cytoskeleton</location>
        <location evidence="5 7 10">Microtubule organizing center</location>
        <location evidence="5 7 10">Centrosome</location>
    </subcellularLocation>
    <subcellularLocation>
        <location evidence="5 7">Midbody</location>
    </subcellularLocation>
    <subcellularLocation>
        <location evidence="6 7 8 9 10">Cytoplasm</location>
    </subcellularLocation>
    <subcellularLocation>
        <location evidence="5 10">Nucleus</location>
    </subcellularLocation>
    <subcellularLocation>
        <location evidence="5 10">Chromosome</location>
    </subcellularLocation>
    <subcellularLocation>
        <location evidence="10">Chromosome</location>
        <location evidence="10">Centromere</location>
        <location evidence="10">Kinetochore</location>
    </subcellularLocation>
    <text evidence="5 6 8">In mitosis, remains associated with centrosomes entering prophase through to anaphase. During metaphase, embryos show anterior enrichment and located to the chromosomes of the metaphase plate. In meiosis, detected at centrosomes after pronuclear meeting in post-meiotic 1-cell embryos. Associated with chromatin during chromosome segregation of anaphase and in the region between the dividing chromosomes. Cytoplasmic in mature, unfertilized oocytes (PubMed:10660671). Asymmetric cytoplasmic localization is regulated by mex-5 and mex-6 (PubMed:18199581, PubMed:18316412).</text>
</comment>
<comment type="tissue specificity">
    <text evidence="6 9">Embryos.</text>
</comment>
<comment type="domain">
    <text evidence="6 8">The POLO box domains are involved in the asymmetric cytoplasmic localization.</text>
</comment>
<comment type="disruption phenotype">
    <text evidence="8 9 10">Impaired protein polarity (PubMed:18316412, PubMed:20823068). Lengthened AB and P1 cell cycle times (PubMed:18316412, PubMed:20823068). RNAi-mediated knockdown causes defects in germline mitosis including cell-cylce arrest and formation of polyploid nuclei (PubMed:22018922). RNAi-mediated knockdown in plk-2 mutant background causes a loss in sun-1 phosphorylation at 'Ser-8' but not at 'Ser-12' (PubMed:22018922).</text>
</comment>
<comment type="similarity">
    <text evidence="2">Belongs to the protein kinase superfamily. Ser/Thr protein kinase family. CDC5/Polo subfamily.</text>
</comment>
<name>PLK1_CAEEL</name>
<organism>
    <name type="scientific">Caenorhabditis elegans</name>
    <dbReference type="NCBI Taxonomy" id="6239"/>
    <lineage>
        <taxon>Eukaryota</taxon>
        <taxon>Metazoa</taxon>
        <taxon>Ecdysozoa</taxon>
        <taxon>Nematoda</taxon>
        <taxon>Chromadorea</taxon>
        <taxon>Rhabditida</taxon>
        <taxon>Rhabditina</taxon>
        <taxon>Rhabditomorpha</taxon>
        <taxon>Rhabditoidea</taxon>
        <taxon>Rhabditidae</taxon>
        <taxon>Peloderinae</taxon>
        <taxon>Caenorhabditis</taxon>
    </lineage>
</organism>
<accession>P34331</accession>
<accession>O61662</accession>
<accession>O76763</accession>
<evidence type="ECO:0000255" key="1">
    <source>
        <dbReference type="PROSITE-ProRule" id="PRU00154"/>
    </source>
</evidence>
<evidence type="ECO:0000255" key="2">
    <source>
        <dbReference type="PROSITE-ProRule" id="PRU00159"/>
    </source>
</evidence>
<evidence type="ECO:0000255" key="3">
    <source>
        <dbReference type="PROSITE-ProRule" id="PRU10027"/>
    </source>
</evidence>
<evidence type="ECO:0000256" key="4">
    <source>
        <dbReference type="SAM" id="MobiDB-lite"/>
    </source>
</evidence>
<evidence type="ECO:0000269" key="5">
    <source>
    </source>
</evidence>
<evidence type="ECO:0000269" key="6">
    <source>
    </source>
</evidence>
<evidence type="ECO:0000269" key="7">
    <source>
    </source>
</evidence>
<evidence type="ECO:0000269" key="8">
    <source>
    </source>
</evidence>
<evidence type="ECO:0000269" key="9">
    <source>
    </source>
</evidence>
<evidence type="ECO:0000269" key="10">
    <source>
    </source>
</evidence>
<feature type="chain" id="PRO_0000086569" description="Serine/threonine-protein kinase plk-1">
    <location>
        <begin position="1"/>
        <end position="648"/>
    </location>
</feature>
<feature type="domain" description="Protein kinase" evidence="2">
    <location>
        <begin position="38"/>
        <end position="289"/>
    </location>
</feature>
<feature type="domain" description="POLO box 1" evidence="1">
    <location>
        <begin position="412"/>
        <end position="492"/>
    </location>
</feature>
<feature type="domain" description="POLO box 2" evidence="1">
    <location>
        <begin position="514"/>
        <end position="596"/>
    </location>
</feature>
<feature type="region of interest" description="Disordered" evidence="4">
    <location>
        <begin position="1"/>
        <end position="24"/>
    </location>
</feature>
<feature type="compositionally biased region" description="Low complexity" evidence="4">
    <location>
        <begin position="612"/>
        <end position="629"/>
    </location>
</feature>
<feature type="active site" description="Proton acceptor" evidence="2 3">
    <location>
        <position position="161"/>
    </location>
</feature>
<feature type="binding site" evidence="2">
    <location>
        <begin position="44"/>
        <end position="52"/>
    </location>
    <ligand>
        <name>ATP</name>
        <dbReference type="ChEBI" id="CHEBI:30616"/>
    </ligand>
</feature>
<feature type="binding site" evidence="2">
    <location>
        <position position="67"/>
    </location>
    <ligand>
        <name>ATP</name>
        <dbReference type="ChEBI" id="CHEBI:30616"/>
    </ligand>
</feature>
<dbReference type="EC" id="2.7.11.21"/>
<dbReference type="EMBL" id="AF057165">
    <property type="protein sequence ID" value="AAC14129.1"/>
    <property type="molecule type" value="mRNA"/>
</dbReference>
<dbReference type="EMBL" id="AF080581">
    <property type="protein sequence ID" value="AAC34661.1"/>
    <property type="molecule type" value="mRNA"/>
</dbReference>
<dbReference type="EMBL" id="FO080531">
    <property type="protein sequence ID" value="CCD64438.1"/>
    <property type="molecule type" value="Genomic_DNA"/>
</dbReference>
<dbReference type="EMBL" id="FO080531">
    <property type="protein sequence ID" value="CCD64439.1"/>
    <property type="molecule type" value="Genomic_DNA"/>
</dbReference>
<dbReference type="PIR" id="A88520">
    <property type="entry name" value="A88520"/>
</dbReference>
<dbReference type="PIR" id="T43337">
    <property type="entry name" value="T43337"/>
</dbReference>
<dbReference type="RefSeq" id="NP_001021174.1">
    <property type="nucleotide sequence ID" value="NM_001026003.2"/>
</dbReference>
<dbReference type="SMR" id="P34331"/>
<dbReference type="BioGRID" id="41349">
    <property type="interactions" value="743"/>
</dbReference>
<dbReference type="DIP" id="DIP-25456N"/>
<dbReference type="FunCoup" id="P34331">
    <property type="interactions" value="1333"/>
</dbReference>
<dbReference type="IntAct" id="P34331">
    <property type="interactions" value="14"/>
</dbReference>
<dbReference type="STRING" id="6239.C14B9.4b.1"/>
<dbReference type="iPTMnet" id="P34331"/>
<dbReference type="PaxDb" id="6239-C14B9.4b"/>
<dbReference type="PeptideAtlas" id="P34331"/>
<dbReference type="GeneID" id="176143"/>
<dbReference type="KEGG" id="cel:CELE_C14B9.4"/>
<dbReference type="AGR" id="WB:WBGene00004042"/>
<dbReference type="CTD" id="176143"/>
<dbReference type="WormBase" id="C14B9.4a">
    <property type="protein sequence ID" value="CE26649"/>
    <property type="gene ID" value="WBGene00004042"/>
    <property type="gene designation" value="plk-1"/>
</dbReference>
<dbReference type="eggNOG" id="KOG0575">
    <property type="taxonomic scope" value="Eukaryota"/>
</dbReference>
<dbReference type="GeneTree" id="ENSGT00940000166918"/>
<dbReference type="HOGENOM" id="CLU_000288_46_1_1"/>
<dbReference type="InParanoid" id="P34331"/>
<dbReference type="OMA" id="IQIHKSM"/>
<dbReference type="OrthoDB" id="408964at2759"/>
<dbReference type="PhylomeDB" id="P34331"/>
<dbReference type="BRENDA" id="2.7.11.21">
    <property type="organism ID" value="1045"/>
</dbReference>
<dbReference type="PRO" id="PR:P34331"/>
<dbReference type="Proteomes" id="UP000001940">
    <property type="component" value="Chromosome III"/>
</dbReference>
<dbReference type="Bgee" id="WBGene00004042">
    <property type="expression patterns" value="Expressed in germ line (C elegans) and 4 other cell types or tissues"/>
</dbReference>
<dbReference type="GO" id="GO:0005813">
    <property type="term" value="C:centrosome"/>
    <property type="evidence" value="ECO:0000314"/>
    <property type="project" value="WormBase"/>
</dbReference>
<dbReference type="GO" id="GO:0000793">
    <property type="term" value="C:condensed chromosome"/>
    <property type="evidence" value="ECO:0000314"/>
    <property type="project" value="WormBase"/>
</dbReference>
<dbReference type="GO" id="GO:0005737">
    <property type="term" value="C:cytoplasm"/>
    <property type="evidence" value="ECO:0000314"/>
    <property type="project" value="WormBase"/>
</dbReference>
<dbReference type="GO" id="GO:0000776">
    <property type="term" value="C:kinetochore"/>
    <property type="evidence" value="ECO:0000318"/>
    <property type="project" value="GO_Central"/>
</dbReference>
<dbReference type="GO" id="GO:0030496">
    <property type="term" value="C:midbody"/>
    <property type="evidence" value="ECO:0007669"/>
    <property type="project" value="UniProtKB-SubCell"/>
</dbReference>
<dbReference type="GO" id="GO:0005634">
    <property type="term" value="C:nucleus"/>
    <property type="evidence" value="ECO:0000314"/>
    <property type="project" value="UniProtKB"/>
</dbReference>
<dbReference type="GO" id="GO:0051233">
    <property type="term" value="C:spindle midzone"/>
    <property type="evidence" value="ECO:0000314"/>
    <property type="project" value="WormBase"/>
</dbReference>
<dbReference type="GO" id="GO:0000922">
    <property type="term" value="C:spindle pole"/>
    <property type="evidence" value="ECO:0000318"/>
    <property type="project" value="GO_Central"/>
</dbReference>
<dbReference type="GO" id="GO:0005524">
    <property type="term" value="F:ATP binding"/>
    <property type="evidence" value="ECO:0007669"/>
    <property type="project" value="UniProtKB-KW"/>
</dbReference>
<dbReference type="GO" id="GO:0106310">
    <property type="term" value="F:protein serine kinase activity"/>
    <property type="evidence" value="ECO:0007669"/>
    <property type="project" value="RHEA"/>
</dbReference>
<dbReference type="GO" id="GO:0004674">
    <property type="term" value="F:protein serine/threonine kinase activity"/>
    <property type="evidence" value="ECO:0000314"/>
    <property type="project" value="WormBase"/>
</dbReference>
<dbReference type="GO" id="GO:0007098">
    <property type="term" value="P:centrosome cycle"/>
    <property type="evidence" value="ECO:0000315"/>
    <property type="project" value="UniProtKB"/>
</dbReference>
<dbReference type="GO" id="GO:0007147">
    <property type="term" value="P:female meiosis II"/>
    <property type="evidence" value="ECO:0000315"/>
    <property type="project" value="UniProtKB"/>
</dbReference>
<dbReference type="GO" id="GO:0045132">
    <property type="term" value="P:meiotic chromosome segregation"/>
    <property type="evidence" value="ECO:0000315"/>
    <property type="project" value="WormBase"/>
</dbReference>
<dbReference type="GO" id="GO:0007077">
    <property type="term" value="P:mitotic nuclear membrane disassembly"/>
    <property type="evidence" value="ECO:0000315"/>
    <property type="project" value="UniProtKB"/>
</dbReference>
<dbReference type="GO" id="GO:0007052">
    <property type="term" value="P:mitotic spindle organization"/>
    <property type="evidence" value="ECO:0000315"/>
    <property type="project" value="UniProtKB"/>
</dbReference>
<dbReference type="GO" id="GO:0040038">
    <property type="term" value="P:polar body extrusion after meiotic divisions"/>
    <property type="evidence" value="ECO:0000315"/>
    <property type="project" value="WormBase"/>
</dbReference>
<dbReference type="GO" id="GO:0110039">
    <property type="term" value="P:positive regulation of nematode male tail tip morphogenesis"/>
    <property type="evidence" value="ECO:0000315"/>
    <property type="project" value="UniProtKB"/>
</dbReference>
<dbReference type="GO" id="GO:0051726">
    <property type="term" value="P:regulation of cell cycle"/>
    <property type="evidence" value="ECO:0000315"/>
    <property type="project" value="WormBase"/>
</dbReference>
<dbReference type="CDD" id="cd13118">
    <property type="entry name" value="POLO_box_1"/>
    <property type="match status" value="1"/>
</dbReference>
<dbReference type="CDD" id="cd13117">
    <property type="entry name" value="POLO_box_2"/>
    <property type="match status" value="1"/>
</dbReference>
<dbReference type="CDD" id="cd14099">
    <property type="entry name" value="STKc_PLK"/>
    <property type="match status" value="1"/>
</dbReference>
<dbReference type="FunFam" id="1.10.510.10:FF:000727">
    <property type="entry name" value="Serine/threonine-protein kinase PLK"/>
    <property type="match status" value="1"/>
</dbReference>
<dbReference type="FunFam" id="3.30.1120.30:FF:000001">
    <property type="entry name" value="Serine/threonine-protein kinase PLK"/>
    <property type="match status" value="1"/>
</dbReference>
<dbReference type="FunFam" id="3.30.200.20:FF:000091">
    <property type="entry name" value="Serine/threonine-protein kinase PLK"/>
    <property type="match status" value="1"/>
</dbReference>
<dbReference type="Gene3D" id="3.30.200.20">
    <property type="entry name" value="Phosphorylase Kinase, domain 1"/>
    <property type="match status" value="1"/>
</dbReference>
<dbReference type="Gene3D" id="3.30.1120.30">
    <property type="entry name" value="POLO box domain"/>
    <property type="match status" value="2"/>
</dbReference>
<dbReference type="Gene3D" id="1.10.510.10">
    <property type="entry name" value="Transferase(Phosphotransferase) domain 1"/>
    <property type="match status" value="1"/>
</dbReference>
<dbReference type="InterPro" id="IPR011009">
    <property type="entry name" value="Kinase-like_dom_sf"/>
</dbReference>
<dbReference type="InterPro" id="IPR033701">
    <property type="entry name" value="POLO_box_1"/>
</dbReference>
<dbReference type="InterPro" id="IPR033695">
    <property type="entry name" value="POLO_box_2"/>
</dbReference>
<dbReference type="InterPro" id="IPR000959">
    <property type="entry name" value="POLO_box_dom"/>
</dbReference>
<dbReference type="InterPro" id="IPR036947">
    <property type="entry name" value="POLO_box_dom_sf"/>
</dbReference>
<dbReference type="InterPro" id="IPR000719">
    <property type="entry name" value="Prot_kinase_dom"/>
</dbReference>
<dbReference type="InterPro" id="IPR017441">
    <property type="entry name" value="Protein_kinase_ATP_BS"/>
</dbReference>
<dbReference type="InterPro" id="IPR008271">
    <property type="entry name" value="Ser/Thr_kinase_AS"/>
</dbReference>
<dbReference type="PANTHER" id="PTHR24345">
    <property type="entry name" value="SERINE/THREONINE-PROTEIN KINASE PLK"/>
    <property type="match status" value="1"/>
</dbReference>
<dbReference type="PANTHER" id="PTHR24345:SF52">
    <property type="entry name" value="SERINE_THREONINE-PROTEIN KINASE PLK-1"/>
    <property type="match status" value="1"/>
</dbReference>
<dbReference type="Pfam" id="PF00069">
    <property type="entry name" value="Pkinase"/>
    <property type="match status" value="1"/>
</dbReference>
<dbReference type="Pfam" id="PF00659">
    <property type="entry name" value="POLO_box"/>
    <property type="match status" value="2"/>
</dbReference>
<dbReference type="SMART" id="SM00220">
    <property type="entry name" value="S_TKc"/>
    <property type="match status" value="1"/>
</dbReference>
<dbReference type="SUPFAM" id="SSF82615">
    <property type="entry name" value="Polo-box domain"/>
    <property type="match status" value="2"/>
</dbReference>
<dbReference type="SUPFAM" id="SSF56112">
    <property type="entry name" value="Protein kinase-like (PK-like)"/>
    <property type="match status" value="1"/>
</dbReference>
<dbReference type="PROSITE" id="PS50078">
    <property type="entry name" value="POLO_BOX"/>
    <property type="match status" value="2"/>
</dbReference>
<dbReference type="PROSITE" id="PS00107">
    <property type="entry name" value="PROTEIN_KINASE_ATP"/>
    <property type="match status" value="1"/>
</dbReference>
<dbReference type="PROSITE" id="PS50011">
    <property type="entry name" value="PROTEIN_KINASE_DOM"/>
    <property type="match status" value="1"/>
</dbReference>
<dbReference type="PROSITE" id="PS00108">
    <property type="entry name" value="PROTEIN_KINASE_ST"/>
    <property type="match status" value="1"/>
</dbReference>